<protein>
    <recommendedName>
        <fullName evidence="1">2,3-bisphosphoglycerate-dependent phosphoglycerate mutase</fullName>
        <shortName evidence="1">BPG-dependent PGAM</shortName>
        <shortName evidence="1">PGAM</shortName>
        <shortName evidence="1">Phosphoglyceromutase</shortName>
        <shortName evidence="1">dPGM</shortName>
        <ecNumber evidence="1">5.4.2.11</ecNumber>
    </recommendedName>
</protein>
<dbReference type="EC" id="5.4.2.11" evidence="1"/>
<dbReference type="EMBL" id="BA000003">
    <property type="protein sequence ID" value="BAB13013.1"/>
    <property type="molecule type" value="Genomic_DNA"/>
</dbReference>
<dbReference type="RefSeq" id="NP_240127.1">
    <property type="nucleotide sequence ID" value="NC_002528.1"/>
</dbReference>
<dbReference type="RefSeq" id="WP_010896059.1">
    <property type="nucleotide sequence ID" value="NC_002528.1"/>
</dbReference>
<dbReference type="SMR" id="P57390"/>
<dbReference type="STRING" id="563178.BUAP5A_298"/>
<dbReference type="EnsemblBacteria" id="BAB13013">
    <property type="protein sequence ID" value="BAB13013"/>
    <property type="gene ID" value="BAB13013"/>
</dbReference>
<dbReference type="KEGG" id="buc:BU304"/>
<dbReference type="PATRIC" id="fig|107806.10.peg.315"/>
<dbReference type="eggNOG" id="COG0588">
    <property type="taxonomic scope" value="Bacteria"/>
</dbReference>
<dbReference type="HOGENOM" id="CLU_033323_1_1_6"/>
<dbReference type="UniPathway" id="UPA00109">
    <property type="reaction ID" value="UER00186"/>
</dbReference>
<dbReference type="Proteomes" id="UP000001806">
    <property type="component" value="Chromosome"/>
</dbReference>
<dbReference type="GO" id="GO:0004619">
    <property type="term" value="F:phosphoglycerate mutase activity"/>
    <property type="evidence" value="ECO:0007669"/>
    <property type="project" value="UniProtKB-EC"/>
</dbReference>
<dbReference type="GO" id="GO:0006094">
    <property type="term" value="P:gluconeogenesis"/>
    <property type="evidence" value="ECO:0007669"/>
    <property type="project" value="UniProtKB-UniRule"/>
</dbReference>
<dbReference type="GO" id="GO:0006096">
    <property type="term" value="P:glycolytic process"/>
    <property type="evidence" value="ECO:0007669"/>
    <property type="project" value="UniProtKB-UniRule"/>
</dbReference>
<dbReference type="CDD" id="cd07067">
    <property type="entry name" value="HP_PGM_like"/>
    <property type="match status" value="1"/>
</dbReference>
<dbReference type="FunFam" id="3.40.50.1240:FF:000003">
    <property type="entry name" value="2,3-bisphosphoglycerate-dependent phosphoglycerate mutase"/>
    <property type="match status" value="1"/>
</dbReference>
<dbReference type="Gene3D" id="3.40.50.1240">
    <property type="entry name" value="Phosphoglycerate mutase-like"/>
    <property type="match status" value="1"/>
</dbReference>
<dbReference type="HAMAP" id="MF_01039">
    <property type="entry name" value="PGAM_GpmA"/>
    <property type="match status" value="1"/>
</dbReference>
<dbReference type="InterPro" id="IPR013078">
    <property type="entry name" value="His_Pase_superF_clade-1"/>
</dbReference>
<dbReference type="InterPro" id="IPR029033">
    <property type="entry name" value="His_PPase_superfam"/>
</dbReference>
<dbReference type="InterPro" id="IPR001345">
    <property type="entry name" value="PG/BPGM_mutase_AS"/>
</dbReference>
<dbReference type="InterPro" id="IPR005952">
    <property type="entry name" value="Phosphogly_mut1"/>
</dbReference>
<dbReference type="NCBIfam" id="TIGR01258">
    <property type="entry name" value="pgm_1"/>
    <property type="match status" value="1"/>
</dbReference>
<dbReference type="NCBIfam" id="NF010713">
    <property type="entry name" value="PRK14115.1"/>
    <property type="match status" value="1"/>
</dbReference>
<dbReference type="PANTHER" id="PTHR11931">
    <property type="entry name" value="PHOSPHOGLYCERATE MUTASE"/>
    <property type="match status" value="1"/>
</dbReference>
<dbReference type="Pfam" id="PF00300">
    <property type="entry name" value="His_Phos_1"/>
    <property type="match status" value="2"/>
</dbReference>
<dbReference type="PIRSF" id="PIRSF000709">
    <property type="entry name" value="6PFK_2-Ptase"/>
    <property type="match status" value="1"/>
</dbReference>
<dbReference type="SMART" id="SM00855">
    <property type="entry name" value="PGAM"/>
    <property type="match status" value="1"/>
</dbReference>
<dbReference type="SUPFAM" id="SSF53254">
    <property type="entry name" value="Phosphoglycerate mutase-like"/>
    <property type="match status" value="1"/>
</dbReference>
<dbReference type="PROSITE" id="PS00175">
    <property type="entry name" value="PG_MUTASE"/>
    <property type="match status" value="1"/>
</dbReference>
<feature type="chain" id="PRO_0000179858" description="2,3-bisphosphoglycerate-dependent phosphoglycerate mutase">
    <location>
        <begin position="1"/>
        <end position="231"/>
    </location>
</feature>
<feature type="active site" description="Tele-phosphohistidine intermediate" evidence="1">
    <location>
        <position position="11"/>
    </location>
</feature>
<feature type="active site" description="Proton donor/acceptor" evidence="1">
    <location>
        <position position="89"/>
    </location>
</feature>
<feature type="binding site" evidence="1">
    <location>
        <begin position="10"/>
        <end position="17"/>
    </location>
    <ligand>
        <name>substrate</name>
    </ligand>
</feature>
<feature type="binding site" evidence="1">
    <location>
        <begin position="23"/>
        <end position="24"/>
    </location>
    <ligand>
        <name>substrate</name>
    </ligand>
</feature>
<feature type="binding site" evidence="1">
    <location>
        <position position="62"/>
    </location>
    <ligand>
        <name>substrate</name>
    </ligand>
</feature>
<feature type="binding site" evidence="1">
    <location>
        <begin position="89"/>
        <end position="92"/>
    </location>
    <ligand>
        <name>substrate</name>
    </ligand>
</feature>
<feature type="binding site" evidence="1">
    <location>
        <position position="100"/>
    </location>
    <ligand>
        <name>substrate</name>
    </ligand>
</feature>
<feature type="binding site" evidence="1">
    <location>
        <begin position="116"/>
        <end position="117"/>
    </location>
    <ligand>
        <name>substrate</name>
    </ligand>
</feature>
<feature type="binding site" evidence="1">
    <location>
        <begin position="185"/>
        <end position="186"/>
    </location>
    <ligand>
        <name>substrate</name>
    </ligand>
</feature>
<feature type="site" description="Transition state stabilizer" evidence="1">
    <location>
        <position position="184"/>
    </location>
</feature>
<comment type="function">
    <text evidence="1">Catalyzes the interconversion of 2-phosphoglycerate and 3-phosphoglycerate.</text>
</comment>
<comment type="catalytic activity">
    <reaction evidence="1">
        <text>(2R)-2-phosphoglycerate = (2R)-3-phosphoglycerate</text>
        <dbReference type="Rhea" id="RHEA:15901"/>
        <dbReference type="ChEBI" id="CHEBI:58272"/>
        <dbReference type="ChEBI" id="CHEBI:58289"/>
        <dbReference type="EC" id="5.4.2.11"/>
    </reaction>
</comment>
<comment type="pathway">
    <text evidence="1">Carbohydrate degradation; glycolysis; pyruvate from D-glyceraldehyde 3-phosphate: step 3/5.</text>
</comment>
<comment type="subunit">
    <text evidence="1">Homodimer.</text>
</comment>
<comment type="similarity">
    <text evidence="1">Belongs to the phosphoglycerate mutase family. BPG-dependent PGAM subfamily.</text>
</comment>
<reference key="1">
    <citation type="journal article" date="2000" name="Nature">
        <title>Genome sequence of the endocellular bacterial symbiont of aphids Buchnera sp. APS.</title>
        <authorList>
            <person name="Shigenobu S."/>
            <person name="Watanabe H."/>
            <person name="Hattori M."/>
            <person name="Sakaki Y."/>
            <person name="Ishikawa H."/>
        </authorList>
    </citation>
    <scope>NUCLEOTIDE SEQUENCE [LARGE SCALE GENOMIC DNA]</scope>
    <source>
        <strain>APS</strain>
    </source>
</reference>
<accession>P57390</accession>
<gene>
    <name evidence="1" type="primary">gpmA</name>
    <name type="synonym">gpm</name>
    <name type="ordered locus">BU304</name>
</gene>
<keyword id="KW-0312">Gluconeogenesis</keyword>
<keyword id="KW-0324">Glycolysis</keyword>
<keyword id="KW-0413">Isomerase</keyword>
<keyword id="KW-1185">Reference proteome</keyword>
<name>GPMA_BUCAI</name>
<proteinExistence type="inferred from homology"/>
<sequence>MKINQVVLIRHGQSEWNTLNKFTGWHDAELDKKGKDEAKFAAILLKKEKFFFDCAHTSLLKRAIHTLQYILDELNQTWLSVKKSWRLNERHYGALEGLNKDEVIEKYGQKQVLLWRRSFDISPPQINIKDKRFPGNDPRYSHLNIHDIPLGESLEKTAKRVIPYWNKIVYPELKNNKKILIVAHGNSLRALIQHLYKIDNKAILDLNIPTAQPIILDFDNEKNPIKWHYLT</sequence>
<evidence type="ECO:0000255" key="1">
    <source>
        <dbReference type="HAMAP-Rule" id="MF_01039"/>
    </source>
</evidence>
<organism>
    <name type="scientific">Buchnera aphidicola subsp. Acyrthosiphon pisum (strain APS)</name>
    <name type="common">Acyrthosiphon pisum symbiotic bacterium</name>
    <dbReference type="NCBI Taxonomy" id="107806"/>
    <lineage>
        <taxon>Bacteria</taxon>
        <taxon>Pseudomonadati</taxon>
        <taxon>Pseudomonadota</taxon>
        <taxon>Gammaproteobacteria</taxon>
        <taxon>Enterobacterales</taxon>
        <taxon>Erwiniaceae</taxon>
        <taxon>Buchnera</taxon>
    </lineage>
</organism>